<feature type="chain" id="PRO_0000301514" description="Fatty acid metabolism regulator protein">
    <location>
        <begin position="1"/>
        <end position="239"/>
    </location>
</feature>
<feature type="domain" description="HTH gntR-type" evidence="1">
    <location>
        <begin position="6"/>
        <end position="74"/>
    </location>
</feature>
<feature type="DNA-binding region" description="H-T-H motif" evidence="1">
    <location>
        <begin position="34"/>
        <end position="53"/>
    </location>
</feature>
<keyword id="KW-0010">Activator</keyword>
<keyword id="KW-0963">Cytoplasm</keyword>
<keyword id="KW-0238">DNA-binding</keyword>
<keyword id="KW-0276">Fatty acid metabolism</keyword>
<keyword id="KW-0443">Lipid metabolism</keyword>
<keyword id="KW-0678">Repressor</keyword>
<keyword id="KW-0804">Transcription</keyword>
<keyword id="KW-0805">Transcription regulation</keyword>
<reference key="1">
    <citation type="journal article" date="2005" name="Nucleic Acids Res.">
        <title>Genome dynamics and diversity of Shigella species, the etiologic agents of bacillary dysentery.</title>
        <authorList>
            <person name="Yang F."/>
            <person name="Yang J."/>
            <person name="Zhang X."/>
            <person name="Chen L."/>
            <person name="Jiang Y."/>
            <person name="Yan Y."/>
            <person name="Tang X."/>
            <person name="Wang J."/>
            <person name="Xiong Z."/>
            <person name="Dong J."/>
            <person name="Xue Y."/>
            <person name="Zhu Y."/>
            <person name="Xu X."/>
            <person name="Sun L."/>
            <person name="Chen S."/>
            <person name="Nie H."/>
            <person name="Peng J."/>
            <person name="Xu J."/>
            <person name="Wang Y."/>
            <person name="Yuan Z."/>
            <person name="Wen Y."/>
            <person name="Yao Z."/>
            <person name="Shen Y."/>
            <person name="Qiang B."/>
            <person name="Hou Y."/>
            <person name="Yu J."/>
            <person name="Jin Q."/>
        </authorList>
    </citation>
    <scope>NUCLEOTIDE SEQUENCE [LARGE SCALE GENOMIC DNA]</scope>
    <source>
        <strain>Sb227</strain>
    </source>
</reference>
<dbReference type="EMBL" id="CP000036">
    <property type="protein sequence ID" value="ABB66480.1"/>
    <property type="molecule type" value="Genomic_DNA"/>
</dbReference>
<dbReference type="RefSeq" id="WP_000234823.1">
    <property type="nucleotide sequence ID" value="NC_007613.1"/>
</dbReference>
<dbReference type="SMR" id="Q31ZM8"/>
<dbReference type="GeneID" id="93776245"/>
<dbReference type="KEGG" id="sbo:SBO_1885"/>
<dbReference type="HOGENOM" id="CLU_017584_9_4_6"/>
<dbReference type="Proteomes" id="UP000007067">
    <property type="component" value="Chromosome"/>
</dbReference>
<dbReference type="GO" id="GO:0005737">
    <property type="term" value="C:cytoplasm"/>
    <property type="evidence" value="ECO:0007669"/>
    <property type="project" value="UniProtKB-SubCell"/>
</dbReference>
<dbReference type="GO" id="GO:0003677">
    <property type="term" value="F:DNA binding"/>
    <property type="evidence" value="ECO:0007669"/>
    <property type="project" value="UniProtKB-KW"/>
</dbReference>
<dbReference type="GO" id="GO:0003700">
    <property type="term" value="F:DNA-binding transcription factor activity"/>
    <property type="evidence" value="ECO:0007669"/>
    <property type="project" value="UniProtKB-UniRule"/>
</dbReference>
<dbReference type="GO" id="GO:0000062">
    <property type="term" value="F:fatty-acyl-CoA binding"/>
    <property type="evidence" value="ECO:0007669"/>
    <property type="project" value="InterPro"/>
</dbReference>
<dbReference type="GO" id="GO:0006631">
    <property type="term" value="P:fatty acid metabolic process"/>
    <property type="evidence" value="ECO:0007669"/>
    <property type="project" value="UniProtKB-KW"/>
</dbReference>
<dbReference type="GO" id="GO:0019217">
    <property type="term" value="P:regulation of fatty acid metabolic process"/>
    <property type="evidence" value="ECO:0007669"/>
    <property type="project" value="UniProtKB-UniRule"/>
</dbReference>
<dbReference type="CDD" id="cd07377">
    <property type="entry name" value="WHTH_GntR"/>
    <property type="match status" value="1"/>
</dbReference>
<dbReference type="FunFam" id="1.10.10.10:FF:000036">
    <property type="entry name" value="Fatty acid metabolism regulator protein"/>
    <property type="match status" value="1"/>
</dbReference>
<dbReference type="FunFam" id="1.20.120.530:FF:000003">
    <property type="entry name" value="Fatty acid metabolism regulator protein"/>
    <property type="match status" value="1"/>
</dbReference>
<dbReference type="Gene3D" id="1.20.120.530">
    <property type="entry name" value="GntR ligand-binding domain-like"/>
    <property type="match status" value="1"/>
</dbReference>
<dbReference type="Gene3D" id="1.10.10.10">
    <property type="entry name" value="Winged helix-like DNA-binding domain superfamily/Winged helix DNA-binding domain"/>
    <property type="match status" value="1"/>
</dbReference>
<dbReference type="HAMAP" id="MF_00696">
    <property type="entry name" value="HTH_FadR"/>
    <property type="match status" value="1"/>
</dbReference>
<dbReference type="InterPro" id="IPR014178">
    <property type="entry name" value="FA-response_TF_FadR"/>
</dbReference>
<dbReference type="InterPro" id="IPR028374">
    <property type="entry name" value="FadR_C"/>
</dbReference>
<dbReference type="InterPro" id="IPR008920">
    <property type="entry name" value="TF_FadR/GntR_C"/>
</dbReference>
<dbReference type="InterPro" id="IPR000524">
    <property type="entry name" value="Tscrpt_reg_HTH_GntR"/>
</dbReference>
<dbReference type="InterPro" id="IPR036388">
    <property type="entry name" value="WH-like_DNA-bd_sf"/>
</dbReference>
<dbReference type="InterPro" id="IPR036390">
    <property type="entry name" value="WH_DNA-bd_sf"/>
</dbReference>
<dbReference type="NCBIfam" id="TIGR02812">
    <property type="entry name" value="fadR_gamma"/>
    <property type="match status" value="1"/>
</dbReference>
<dbReference type="NCBIfam" id="NF003444">
    <property type="entry name" value="PRK04984.1"/>
    <property type="match status" value="1"/>
</dbReference>
<dbReference type="PANTHER" id="PTHR43537:SF52">
    <property type="entry name" value="FATTY ACID METABOLISM REGULATOR PROTEIN"/>
    <property type="match status" value="1"/>
</dbReference>
<dbReference type="PANTHER" id="PTHR43537">
    <property type="entry name" value="TRANSCRIPTIONAL REGULATOR, GNTR FAMILY"/>
    <property type="match status" value="1"/>
</dbReference>
<dbReference type="Pfam" id="PF07840">
    <property type="entry name" value="FadR_C"/>
    <property type="match status" value="1"/>
</dbReference>
<dbReference type="Pfam" id="PF00392">
    <property type="entry name" value="GntR"/>
    <property type="match status" value="1"/>
</dbReference>
<dbReference type="PRINTS" id="PR00035">
    <property type="entry name" value="HTHGNTR"/>
</dbReference>
<dbReference type="SMART" id="SM00345">
    <property type="entry name" value="HTH_GNTR"/>
    <property type="match status" value="1"/>
</dbReference>
<dbReference type="SUPFAM" id="SSF48008">
    <property type="entry name" value="GntR ligand-binding domain-like"/>
    <property type="match status" value="1"/>
</dbReference>
<dbReference type="SUPFAM" id="SSF46785">
    <property type="entry name" value="Winged helix' DNA-binding domain"/>
    <property type="match status" value="1"/>
</dbReference>
<dbReference type="PROSITE" id="PS50949">
    <property type="entry name" value="HTH_GNTR"/>
    <property type="match status" value="1"/>
</dbReference>
<sequence length="239" mass="26969">MVIKAQSPAGFAEEYIIESIWNNRFPPGTILPAERELSELIGVTRTTLREVLQRLARDGWLTIQHGKPTKVNNFWETSGLNILETLARLDHESVPQLIDNLLSVRTNISTIFIRTAFRQHPDKAQEVLATANEVADHADAFAELDYNIFRGLAFASGNPIYGLILNGMKGLYTRIGRHYFANPEARSLALGFYHKLSALCSEGAHDQVYETVRRYGHESGEIWHRMQKNLPGDLAIQGR</sequence>
<proteinExistence type="inferred from homology"/>
<evidence type="ECO:0000255" key="1">
    <source>
        <dbReference type="HAMAP-Rule" id="MF_00696"/>
    </source>
</evidence>
<gene>
    <name evidence="1" type="primary">fadR</name>
    <name type="ordered locus">SBO_1885</name>
</gene>
<protein>
    <recommendedName>
        <fullName evidence="1">Fatty acid metabolism regulator protein</fullName>
    </recommendedName>
</protein>
<accession>Q31ZM8</accession>
<organism>
    <name type="scientific">Shigella boydii serotype 4 (strain Sb227)</name>
    <dbReference type="NCBI Taxonomy" id="300268"/>
    <lineage>
        <taxon>Bacteria</taxon>
        <taxon>Pseudomonadati</taxon>
        <taxon>Pseudomonadota</taxon>
        <taxon>Gammaproteobacteria</taxon>
        <taxon>Enterobacterales</taxon>
        <taxon>Enterobacteriaceae</taxon>
        <taxon>Shigella</taxon>
    </lineage>
</organism>
<name>FADR_SHIBS</name>
<comment type="function">
    <text evidence="1">Multifunctional regulator of fatty acid metabolism.</text>
</comment>
<comment type="subunit">
    <text evidence="1">Homodimer.</text>
</comment>
<comment type="subcellular location">
    <subcellularLocation>
        <location evidence="1">Cytoplasm</location>
    </subcellularLocation>
</comment>